<name>TRMA_SULDN</name>
<protein>
    <recommendedName>
        <fullName evidence="1">tRNA/tmRNA (uracil-C(5))-methyltransferase</fullName>
        <ecNumber evidence="1">2.1.1.-</ecNumber>
        <ecNumber evidence="1">2.1.1.35</ecNumber>
    </recommendedName>
    <alternativeName>
        <fullName evidence="1">tRNA (uracil(54)-C(5))-methyltransferase</fullName>
    </alternativeName>
    <alternativeName>
        <fullName evidence="1">tRNA(m5U54)-methyltransferase</fullName>
        <shortName evidence="1">RUMT</shortName>
    </alternativeName>
    <alternativeName>
        <fullName evidence="1">tmRNA (uracil(341)-C(5))-methyltransferase</fullName>
    </alternativeName>
</protein>
<evidence type="ECO:0000255" key="1">
    <source>
        <dbReference type="HAMAP-Rule" id="MF_01011"/>
    </source>
</evidence>
<reference key="1">
    <citation type="journal article" date="2008" name="Appl. Environ. Microbiol.">
        <title>Genome of the epsilonproteobacterial chemolithoautotroph Sulfurimonas denitrificans.</title>
        <authorList>
            <person name="Sievert S.M."/>
            <person name="Scott K.M."/>
            <person name="Klotz M.G."/>
            <person name="Chain P.S.G."/>
            <person name="Hauser L.J."/>
            <person name="Hemp J."/>
            <person name="Huegler M."/>
            <person name="Land M."/>
            <person name="Lapidus A."/>
            <person name="Larimer F.W."/>
            <person name="Lucas S."/>
            <person name="Malfatti S.A."/>
            <person name="Meyer F."/>
            <person name="Paulsen I.T."/>
            <person name="Ren Q."/>
            <person name="Simon J."/>
            <person name="Bailey K."/>
            <person name="Diaz E."/>
            <person name="Fitzpatrick K.A."/>
            <person name="Glover B."/>
            <person name="Gwatney N."/>
            <person name="Korajkic A."/>
            <person name="Long A."/>
            <person name="Mobberley J.M."/>
            <person name="Pantry S.N."/>
            <person name="Pazder G."/>
            <person name="Peterson S."/>
            <person name="Quintanilla J.D."/>
            <person name="Sprinkle R."/>
            <person name="Stephens J."/>
            <person name="Thomas P."/>
            <person name="Vaughn R."/>
            <person name="Weber M.J."/>
            <person name="Wooten L.L."/>
        </authorList>
    </citation>
    <scope>NUCLEOTIDE SEQUENCE [LARGE SCALE GENOMIC DNA]</scope>
    <source>
        <strain>ATCC 33889 / DSM 1251</strain>
    </source>
</reference>
<dbReference type="EC" id="2.1.1.-" evidence="1"/>
<dbReference type="EC" id="2.1.1.35" evidence="1"/>
<dbReference type="EMBL" id="CP000153">
    <property type="protein sequence ID" value="ABB44296.1"/>
    <property type="molecule type" value="Genomic_DNA"/>
</dbReference>
<dbReference type="RefSeq" id="WP_011372648.1">
    <property type="nucleotide sequence ID" value="NC_007575.1"/>
</dbReference>
<dbReference type="SMR" id="Q30RT5"/>
<dbReference type="STRING" id="326298.Suden_1018"/>
<dbReference type="KEGG" id="tdn:Suden_1018"/>
<dbReference type="eggNOG" id="COG2265">
    <property type="taxonomic scope" value="Bacteria"/>
</dbReference>
<dbReference type="HOGENOM" id="CLU_043022_0_0_7"/>
<dbReference type="OrthoDB" id="9804590at2"/>
<dbReference type="Proteomes" id="UP000002714">
    <property type="component" value="Chromosome"/>
</dbReference>
<dbReference type="GO" id="GO:0005829">
    <property type="term" value="C:cytosol"/>
    <property type="evidence" value="ECO:0007669"/>
    <property type="project" value="TreeGrafter"/>
</dbReference>
<dbReference type="GO" id="GO:0019843">
    <property type="term" value="F:rRNA binding"/>
    <property type="evidence" value="ECO:0007669"/>
    <property type="project" value="TreeGrafter"/>
</dbReference>
<dbReference type="GO" id="GO:0030697">
    <property type="term" value="F:tRNA (uracil(54)-C5)-methyltransferase activity, S-adenosyl methionine-dependent"/>
    <property type="evidence" value="ECO:0007669"/>
    <property type="project" value="UniProtKB-EC"/>
</dbReference>
<dbReference type="GO" id="GO:0000049">
    <property type="term" value="F:tRNA binding"/>
    <property type="evidence" value="ECO:0007669"/>
    <property type="project" value="TreeGrafter"/>
</dbReference>
<dbReference type="GO" id="GO:0032259">
    <property type="term" value="P:methylation"/>
    <property type="evidence" value="ECO:0007669"/>
    <property type="project" value="UniProtKB-KW"/>
</dbReference>
<dbReference type="GO" id="GO:0008033">
    <property type="term" value="P:tRNA processing"/>
    <property type="evidence" value="ECO:0007669"/>
    <property type="project" value="UniProtKB-KW"/>
</dbReference>
<dbReference type="CDD" id="cd02440">
    <property type="entry name" value="AdoMet_MTases"/>
    <property type="match status" value="1"/>
</dbReference>
<dbReference type="FunFam" id="3.40.50.150:FF:000012">
    <property type="entry name" value="tRNA/tmRNA (uracil-C(5))-methyltransferase"/>
    <property type="match status" value="1"/>
</dbReference>
<dbReference type="Gene3D" id="2.40.50.1070">
    <property type="match status" value="1"/>
</dbReference>
<dbReference type="Gene3D" id="3.40.50.150">
    <property type="entry name" value="Vaccinia Virus protein VP39"/>
    <property type="match status" value="1"/>
</dbReference>
<dbReference type="HAMAP" id="MF_01011">
    <property type="entry name" value="RNA_methyltr_TrmA"/>
    <property type="match status" value="1"/>
</dbReference>
<dbReference type="InterPro" id="IPR030390">
    <property type="entry name" value="MeTrfase_TrmA_AS"/>
</dbReference>
<dbReference type="InterPro" id="IPR029063">
    <property type="entry name" value="SAM-dependent_MTases_sf"/>
</dbReference>
<dbReference type="InterPro" id="IPR011869">
    <property type="entry name" value="TrmA_MeTrfase"/>
</dbReference>
<dbReference type="InterPro" id="IPR010280">
    <property type="entry name" value="U5_MeTrfase_fam"/>
</dbReference>
<dbReference type="NCBIfam" id="TIGR02143">
    <property type="entry name" value="trmA_only"/>
    <property type="match status" value="1"/>
</dbReference>
<dbReference type="PANTHER" id="PTHR47790">
    <property type="entry name" value="TRNA/TMRNA (URACIL-C(5))-METHYLTRANSFERASE"/>
    <property type="match status" value="1"/>
</dbReference>
<dbReference type="PANTHER" id="PTHR47790:SF2">
    <property type="entry name" value="TRNA_TMRNA (URACIL-C(5))-METHYLTRANSFERASE"/>
    <property type="match status" value="1"/>
</dbReference>
<dbReference type="Pfam" id="PF05958">
    <property type="entry name" value="tRNA_U5-meth_tr"/>
    <property type="match status" value="1"/>
</dbReference>
<dbReference type="SUPFAM" id="SSF53335">
    <property type="entry name" value="S-adenosyl-L-methionine-dependent methyltransferases"/>
    <property type="match status" value="1"/>
</dbReference>
<dbReference type="PROSITE" id="PS51687">
    <property type="entry name" value="SAM_MT_RNA_M5U"/>
    <property type="match status" value="1"/>
</dbReference>
<dbReference type="PROSITE" id="PS01230">
    <property type="entry name" value="TRMA_1"/>
    <property type="match status" value="1"/>
</dbReference>
<keyword id="KW-0489">Methyltransferase</keyword>
<keyword id="KW-1185">Reference proteome</keyword>
<keyword id="KW-0949">S-adenosyl-L-methionine</keyword>
<keyword id="KW-0808">Transferase</keyword>
<keyword id="KW-0819">tRNA processing</keyword>
<accession>Q30RT5</accession>
<proteinExistence type="inferred from homology"/>
<gene>
    <name evidence="1" type="primary">trmA</name>
    <name type="ordered locus">Suden_1018</name>
</gene>
<sequence length="369" mass="42195">MNCKYFGICGACIVYDGGYETQLSQKVELNKELFAPFYMGKISVFESPRSNYRSRSEFKIWHEGDEKINYAMNRADKGGVILIDECPQVSSAIFALMPKLLRAIKRHKIDFKLFGVDFLSSNSGEIVVSLLYHRALDSTFKEIAEIISDELDIYIIGRSRGQKVVIKQDYVTEILHVDGVEFKFNYIENSFTQPNAKVNEQMIGWALRELPNMDADLLELYCGAGNFTIPFASKYRKILATEISKSSINAAKSNMSLNKVKNISFVRMGVEEFVEALDGVRIFNRMKEIDIDSYEIKTIFVDPPRSGMDEATCRFASRYENIIYISCNPQTLLRDLELLTKTHNVIDMALFDQFPYTHHAEMGAKLVKK</sequence>
<feature type="chain" id="PRO_0000281470" description="tRNA/tmRNA (uracil-C(5))-methyltransferase">
    <location>
        <begin position="1"/>
        <end position="369"/>
    </location>
</feature>
<feature type="active site" description="Nucleophile" evidence="1">
    <location>
        <position position="327"/>
    </location>
</feature>
<feature type="active site" description="Proton acceptor" evidence="1">
    <location>
        <position position="361"/>
    </location>
</feature>
<feature type="binding site" evidence="1">
    <location>
        <position position="193"/>
    </location>
    <ligand>
        <name>S-adenosyl-L-methionine</name>
        <dbReference type="ChEBI" id="CHEBI:59789"/>
    </ligand>
</feature>
<feature type="binding site" evidence="1">
    <location>
        <position position="221"/>
    </location>
    <ligand>
        <name>S-adenosyl-L-methionine</name>
        <dbReference type="ChEBI" id="CHEBI:59789"/>
    </ligand>
</feature>
<feature type="binding site" evidence="1">
    <location>
        <position position="226"/>
    </location>
    <ligand>
        <name>S-adenosyl-L-methionine</name>
        <dbReference type="ChEBI" id="CHEBI:59789"/>
    </ligand>
</feature>
<feature type="binding site" evidence="1">
    <location>
        <position position="242"/>
    </location>
    <ligand>
        <name>S-adenosyl-L-methionine</name>
        <dbReference type="ChEBI" id="CHEBI:59789"/>
    </ligand>
</feature>
<feature type="binding site" evidence="1">
    <location>
        <position position="302"/>
    </location>
    <ligand>
        <name>S-adenosyl-L-methionine</name>
        <dbReference type="ChEBI" id="CHEBI:59789"/>
    </ligand>
</feature>
<organism>
    <name type="scientific">Sulfurimonas denitrificans (strain ATCC 33889 / DSM 1251)</name>
    <name type="common">Thiomicrospira denitrificans (strain ATCC 33889 / DSM 1251)</name>
    <dbReference type="NCBI Taxonomy" id="326298"/>
    <lineage>
        <taxon>Bacteria</taxon>
        <taxon>Pseudomonadati</taxon>
        <taxon>Campylobacterota</taxon>
        <taxon>Epsilonproteobacteria</taxon>
        <taxon>Campylobacterales</taxon>
        <taxon>Sulfurimonadaceae</taxon>
        <taxon>Sulfurimonas</taxon>
    </lineage>
</organism>
<comment type="function">
    <text evidence="1">Dual-specificity methyltransferase that catalyzes the formation of 5-methyluridine at position 54 (m5U54) in all tRNAs, and that of position 341 (m5U341) in tmRNA (transfer-mRNA).</text>
</comment>
<comment type="catalytic activity">
    <reaction evidence="1">
        <text>uridine(54) in tRNA + S-adenosyl-L-methionine = 5-methyluridine(54) in tRNA + S-adenosyl-L-homocysteine + H(+)</text>
        <dbReference type="Rhea" id="RHEA:42712"/>
        <dbReference type="Rhea" id="RHEA-COMP:10167"/>
        <dbReference type="Rhea" id="RHEA-COMP:10193"/>
        <dbReference type="ChEBI" id="CHEBI:15378"/>
        <dbReference type="ChEBI" id="CHEBI:57856"/>
        <dbReference type="ChEBI" id="CHEBI:59789"/>
        <dbReference type="ChEBI" id="CHEBI:65315"/>
        <dbReference type="ChEBI" id="CHEBI:74447"/>
        <dbReference type="EC" id="2.1.1.35"/>
    </reaction>
</comment>
<comment type="catalytic activity">
    <reaction evidence="1">
        <text>uridine(341) in tmRNA + S-adenosyl-L-methionine = 5-methyluridine(341) in tmRNA + S-adenosyl-L-homocysteine + H(+)</text>
        <dbReference type="Rhea" id="RHEA:43612"/>
        <dbReference type="Rhea" id="RHEA-COMP:10630"/>
        <dbReference type="Rhea" id="RHEA-COMP:10631"/>
        <dbReference type="ChEBI" id="CHEBI:15378"/>
        <dbReference type="ChEBI" id="CHEBI:57856"/>
        <dbReference type="ChEBI" id="CHEBI:59789"/>
        <dbReference type="ChEBI" id="CHEBI:65315"/>
        <dbReference type="ChEBI" id="CHEBI:74447"/>
    </reaction>
</comment>
<comment type="similarity">
    <text evidence="1">Belongs to the class I-like SAM-binding methyltransferase superfamily. RNA M5U methyltransferase family. TrmA subfamily.</text>
</comment>